<organism>
    <name type="scientific">Oryctolagus cuniculus</name>
    <name type="common">Rabbit</name>
    <dbReference type="NCBI Taxonomy" id="9986"/>
    <lineage>
        <taxon>Eukaryota</taxon>
        <taxon>Metazoa</taxon>
        <taxon>Chordata</taxon>
        <taxon>Craniata</taxon>
        <taxon>Vertebrata</taxon>
        <taxon>Euteleostomi</taxon>
        <taxon>Mammalia</taxon>
        <taxon>Eutheria</taxon>
        <taxon>Euarchontoglires</taxon>
        <taxon>Glires</taxon>
        <taxon>Lagomorpha</taxon>
        <taxon>Leporidae</taxon>
        <taxon>Oryctolagus</taxon>
    </lineage>
</organism>
<accession>G1TTY7</accession>
<feature type="chain" id="PRO_0000460107" description="Large ribosomal subunit protein eL20">
    <location>
        <begin position="1"/>
        <end position="176"/>
    </location>
</feature>
<feature type="modified residue" description="Phosphotyrosine" evidence="2">
    <location>
        <position position="63"/>
    </location>
</feature>
<feature type="modified residue" description="Phosphoserine" evidence="2">
    <location>
        <position position="71"/>
    </location>
</feature>
<feature type="modified residue" description="N6-succinyllysine" evidence="1">
    <location>
        <position position="76"/>
    </location>
</feature>
<feature type="modified residue" description="Phosphoserine" evidence="1">
    <location>
        <position position="123"/>
    </location>
</feature>
<feature type="cross-link" description="Glycyl lysine isopeptide (Lys-Gly) (interchain with G-Cter in SUMO2)" evidence="2">
    <location>
        <position position="11"/>
    </location>
</feature>
<feature type="cross-link" description="Glycyl lysine isopeptide (Lys-Gly) (interchain with G-Cter in SUMO2)" evidence="2">
    <location>
        <position position="128"/>
    </location>
</feature>
<feature type="cross-link" description="Glycyl lysine isopeptide (Lys-Gly) (interchain with G-Cter in SUMO2)" evidence="2">
    <location>
        <position position="170"/>
    </location>
</feature>
<gene>
    <name type="primary">RPL18A</name>
</gene>
<protein>
    <recommendedName>
        <fullName>Large ribosomal subunit protein eL20</fullName>
    </recommendedName>
    <alternativeName>
        <fullName>60S ribosomal protein L18a</fullName>
    </alternativeName>
</protein>
<proteinExistence type="evidence at protein level"/>
<name>RL18A_RABIT</name>
<reference key="1">
    <citation type="journal article" date="2011" name="Nature">
        <title>A high-resolution map of human evolutionary constraint using 29 mammals.</title>
        <authorList>
            <person name="Lindblad-Toh K."/>
            <person name="Garber M."/>
            <person name="Zuk O."/>
            <person name="Lin M.F."/>
            <person name="Parker B.J."/>
            <person name="Washietl S."/>
            <person name="Kheradpour P."/>
            <person name="Ernst J."/>
            <person name="Jordan G."/>
            <person name="Mauceli E."/>
            <person name="Ward L.D."/>
            <person name="Lowe C.B."/>
            <person name="Holloway A.K."/>
            <person name="Clamp M."/>
            <person name="Gnerre S."/>
            <person name="Alfoldi J."/>
            <person name="Beal K."/>
            <person name="Chang J."/>
            <person name="Clawson H."/>
            <person name="Cuff J."/>
            <person name="Di Palma F."/>
            <person name="Fitzgerald S."/>
            <person name="Flicek P."/>
            <person name="Guttman M."/>
            <person name="Hubisz M.J."/>
            <person name="Jaffe D.B."/>
            <person name="Jungreis I."/>
            <person name="Kent W.J."/>
            <person name="Kostka D."/>
            <person name="Lara M."/>
            <person name="Martins A.L."/>
            <person name="Massingham T."/>
            <person name="Moltke I."/>
            <person name="Raney B.J."/>
            <person name="Rasmussen M.D."/>
            <person name="Robinson J."/>
            <person name="Stark A."/>
            <person name="Vilella A.J."/>
            <person name="Wen J."/>
            <person name="Xie X."/>
            <person name="Zody M.C."/>
            <person name="Baldwin J."/>
            <person name="Bloom T."/>
            <person name="Chin C.W."/>
            <person name="Heiman D."/>
            <person name="Nicol R."/>
            <person name="Nusbaum C."/>
            <person name="Young S."/>
            <person name="Wilkinson J."/>
            <person name="Worley K.C."/>
            <person name="Kovar C.L."/>
            <person name="Muzny D.M."/>
            <person name="Gibbs R.A."/>
            <person name="Cree A."/>
            <person name="Dihn H.H."/>
            <person name="Fowler G."/>
            <person name="Jhangiani S."/>
            <person name="Joshi V."/>
            <person name="Lee S."/>
            <person name="Lewis L.R."/>
            <person name="Nazareth L.V."/>
            <person name="Okwuonu G."/>
            <person name="Santibanez J."/>
            <person name="Warren W.C."/>
            <person name="Mardis E.R."/>
            <person name="Weinstock G.M."/>
            <person name="Wilson R.K."/>
            <person name="Delehaunty K."/>
            <person name="Dooling D."/>
            <person name="Fronik C."/>
            <person name="Fulton L."/>
            <person name="Fulton B."/>
            <person name="Graves T."/>
            <person name="Minx P."/>
            <person name="Sodergren E."/>
            <person name="Birney E."/>
            <person name="Margulies E.H."/>
            <person name="Herrero J."/>
            <person name="Green E.D."/>
            <person name="Haussler D."/>
            <person name="Siepel A."/>
            <person name="Goldman N."/>
            <person name="Pollard K.S."/>
            <person name="Pedersen J.S."/>
            <person name="Lander E.S."/>
            <person name="Kellis M."/>
        </authorList>
    </citation>
    <scope>NUCLEOTIDE SEQUENCE [LARGE SCALE GENOMIC DNA]</scope>
    <source>
        <strain>Thorbecke</strain>
    </source>
</reference>
<reference evidence="7" key="2">
    <citation type="journal article" date="2018" name="Elife">
        <title>Dual tRNA mimicry in the Cricket paralysis virus IRES uncovers an unexpected similarity with the Hepatitis C Virus IRES.</title>
        <authorList>
            <person name="Pisareva V.P."/>
            <person name="Pisarev A.V."/>
            <person name="Fernandez I.S."/>
        </authorList>
    </citation>
    <scope>STRUCTURE BY ELECTRON MICROSCOPY (3.20 ANGSTROMS) OF RIBOSOME</scope>
    <scope>SUBUNIT</scope>
    <scope>SUBCELLULAR LOCATION</scope>
</reference>
<reference evidence="9 10" key="3">
    <citation type="journal article" date="2022" name="Science">
        <title>Structure of the mammalian ribosome as it decodes the selenocysteine UGA codon.</title>
        <authorList>
            <person name="Hilal T."/>
            <person name="Killam B.Y."/>
            <person name="Grozdanovic M."/>
            <person name="Dobosz-Bartoszek M."/>
            <person name="Loerke J."/>
            <person name="Buerger J."/>
            <person name="Mielke T."/>
            <person name="Copeland P.R."/>
            <person name="Simonovic M."/>
            <person name="Spahn C.M.T."/>
        </authorList>
    </citation>
    <scope>STRUCTURE BY ELECTRON MICROSCOPY (2.80 ANGSTROMS) OF RIBOSOME</scope>
    <scope>SUBCELLULAR LOCATION</scope>
    <scope>SUBUNIT</scope>
</reference>
<reference evidence="8" key="4">
    <citation type="journal article" date="2023" name="Nature">
        <title>A molecular network of conserved factors keeps ribosomes dormant in the egg.</title>
        <authorList>
            <person name="Leesch F."/>
            <person name="Lorenzo-Orts L."/>
            <person name="Pribitzer C."/>
            <person name="Grishkovskaya I."/>
            <person name="Roehsner J."/>
            <person name="Chugunova A."/>
            <person name="Matzinger M."/>
            <person name="Roitinger E."/>
            <person name="Belacic K."/>
            <person name="Kandolf S."/>
            <person name="Lin T.Y."/>
            <person name="Mechtler K."/>
            <person name="Meinhart A."/>
            <person name="Haselbach D."/>
            <person name="Pauli A."/>
        </authorList>
    </citation>
    <scope>STRUCTURE BY ELECTRON MICROSCOPY (2.30 ANGSTROMS) OF RIBOSOME</scope>
    <scope>SUBCELLULAR LOCATION</scope>
    <scope>SUBUNIT</scope>
</reference>
<sequence length="176" mass="20704">MKASGTLREYKVVGRCLPTPKSPAPPLYRMRIFAPNHVVAKSRFWYFVSQLKKMKKSSGEIVYCGQVFEKSPLRVKNFGIWLRYDSRSGTHNMYREYRDLTTAGAVTQCYRDMGARHRARAHSIQVMKVEEMAAARCRRPAVKQFHDSRIRFPLPHRVLRRQHKPRFSAKRPNTFF</sequence>
<dbReference type="RefSeq" id="XP_051685937.1">
    <property type="nucleotide sequence ID" value="XM_051829977.2"/>
</dbReference>
<dbReference type="PDB" id="6D90">
    <property type="method" value="EM"/>
    <property type="resolution" value="3.20 A"/>
    <property type="chains" value="S=1-176"/>
</dbReference>
<dbReference type="PDB" id="7MDZ">
    <property type="method" value="EM"/>
    <property type="resolution" value="3.20 A"/>
    <property type="chains" value="S=1-176"/>
</dbReference>
<dbReference type="PDB" id="7OBR">
    <property type="method" value="EM"/>
    <property type="resolution" value="2.80 A"/>
    <property type="chains" value="S=2-176"/>
</dbReference>
<dbReference type="PDB" id="7OYD">
    <property type="method" value="EM"/>
    <property type="resolution" value="2.30 A"/>
    <property type="chains" value="LV=1-176"/>
</dbReference>
<dbReference type="PDB" id="7ZJW">
    <property type="method" value="EM"/>
    <property type="resolution" value="2.80 A"/>
    <property type="chains" value="LV=1-176"/>
</dbReference>
<dbReference type="PDB" id="7ZJX">
    <property type="method" value="EM"/>
    <property type="resolution" value="3.10 A"/>
    <property type="chains" value="LV=1-176"/>
</dbReference>
<dbReference type="PDB" id="8B5L">
    <property type="method" value="EM"/>
    <property type="resolution" value="2.86 A"/>
    <property type="chains" value="S=2-173"/>
</dbReference>
<dbReference type="PDB" id="8B6C">
    <property type="method" value="EM"/>
    <property type="resolution" value="2.79 A"/>
    <property type="chains" value="S=2-173"/>
</dbReference>
<dbReference type="PDB" id="8BTK">
    <property type="method" value="EM"/>
    <property type="resolution" value="3.50 A"/>
    <property type="chains" value="BS=1-176"/>
</dbReference>
<dbReference type="PDB" id="8P2K">
    <property type="method" value="EM"/>
    <property type="resolution" value="2.90 A"/>
    <property type="chains" value="BS=1-176"/>
</dbReference>
<dbReference type="PDB" id="8RJB">
    <property type="method" value="EM"/>
    <property type="resolution" value="2.69 A"/>
    <property type="chains" value="S=1-176"/>
</dbReference>
<dbReference type="PDB" id="8RJC">
    <property type="method" value="EM"/>
    <property type="resolution" value="2.90 A"/>
    <property type="chains" value="S=1-176"/>
</dbReference>
<dbReference type="PDB" id="8RJD">
    <property type="method" value="EM"/>
    <property type="resolution" value="2.79 A"/>
    <property type="chains" value="S=1-176"/>
</dbReference>
<dbReference type="PDB" id="9F1B">
    <property type="method" value="EM"/>
    <property type="resolution" value="3.01 A"/>
    <property type="chains" value="BS=1-176"/>
</dbReference>
<dbReference type="PDB" id="9F1C">
    <property type="method" value="EM"/>
    <property type="resolution" value="3.78 A"/>
    <property type="chains" value="BS=1-176"/>
</dbReference>
<dbReference type="PDB" id="9F1D">
    <property type="method" value="EM"/>
    <property type="resolution" value="3.26 A"/>
    <property type="chains" value="BS=1-176"/>
</dbReference>
<dbReference type="PDBsum" id="6D90"/>
<dbReference type="PDBsum" id="7MDZ"/>
<dbReference type="PDBsum" id="7OBR"/>
<dbReference type="PDBsum" id="7OYD"/>
<dbReference type="PDBsum" id="7ZJW"/>
<dbReference type="PDBsum" id="7ZJX"/>
<dbReference type="PDBsum" id="8B5L"/>
<dbReference type="PDBsum" id="8B6C"/>
<dbReference type="PDBsum" id="8BTK"/>
<dbReference type="PDBsum" id="8P2K"/>
<dbReference type="PDBsum" id="8RJB"/>
<dbReference type="PDBsum" id="8RJC"/>
<dbReference type="PDBsum" id="8RJD"/>
<dbReference type="PDBsum" id="9F1B"/>
<dbReference type="PDBsum" id="9F1C"/>
<dbReference type="PDBsum" id="9F1D"/>
<dbReference type="EMDB" id="EMD-0099"/>
<dbReference type="EMDB" id="EMD-0100"/>
<dbReference type="EMDB" id="EMD-0192"/>
<dbReference type="EMDB" id="EMD-0194"/>
<dbReference type="EMDB" id="EMD-0195"/>
<dbReference type="EMDB" id="EMD-0197"/>
<dbReference type="EMDB" id="EMD-10181"/>
<dbReference type="EMDB" id="EMD-10380"/>
<dbReference type="EMDB" id="EMD-12303"/>
<dbReference type="EMDB" id="EMD-12633"/>
<dbReference type="EMDB" id="EMD-12801"/>
<dbReference type="EMDB" id="EMD-13114"/>
<dbReference type="EMDB" id="EMD-15860"/>
<dbReference type="EMDB" id="EMD-15863"/>
<dbReference type="EMDB" id="EMD-16232"/>
<dbReference type="EMDB" id="EMD-20255"/>
<dbReference type="EMDB" id="EMD-20256"/>
<dbReference type="EMDB" id="EMD-20257"/>
<dbReference type="EMDB" id="EMD-20258"/>
<dbReference type="EMDB" id="EMD-23785"/>
<dbReference type="EMDB" id="EMD-25994"/>
<dbReference type="EMDB" id="EMD-26035"/>
<dbReference type="EMDB" id="EMD-26036"/>
<dbReference type="EMDB" id="EMD-26133"/>
<dbReference type="EMDB" id="EMD-40344"/>
<dbReference type="EMDB" id="EMD-4130"/>
<dbReference type="EMDB" id="EMD-4131"/>
<dbReference type="EMDB" id="EMD-4132"/>
<dbReference type="EMDB" id="EMD-4133"/>
<dbReference type="EMDB" id="EMD-4134"/>
<dbReference type="EMDB" id="EMD-4135"/>
<dbReference type="EMDB" id="EMD-4136"/>
<dbReference type="EMDB" id="EMD-4137"/>
<dbReference type="EMDB" id="EMD-4300"/>
<dbReference type="EMDB" id="EMD-4315"/>
<dbReference type="EMDB" id="EMD-4316"/>
<dbReference type="EMDB" id="EMD-4317"/>
<dbReference type="EMDB" id="EMD-43189"/>
<dbReference type="EMDB" id="EMD-44461"/>
<dbReference type="EMDB" id="EMD-44463"/>
<dbReference type="EMDB" id="EMD-44464"/>
<dbReference type="EMDB" id="EMD-4729"/>
<dbReference type="EMDB" id="EMD-4735"/>
<dbReference type="EMDB" id="EMD-4737"/>
<dbReference type="EMDB" id="EMD-4745"/>
<dbReference type="EMDB" id="EMD-50124"/>
<dbReference type="EMDB" id="EMD-50125"/>
<dbReference type="EMDB" id="EMD-50126"/>
<dbReference type="EMDB" id="EMD-7834"/>
<dbReference type="EMDB" id="EMD-7836"/>
<dbReference type="SMR" id="G1TTY7"/>
<dbReference type="FunCoup" id="G1TTY7">
    <property type="interactions" value="1338"/>
</dbReference>
<dbReference type="IntAct" id="G1TTY7">
    <property type="interactions" value="1"/>
</dbReference>
<dbReference type="STRING" id="9986.ENSOCUP00000020510"/>
<dbReference type="PaxDb" id="9986-ENSOCUP00000020510"/>
<dbReference type="GeneID" id="127482724"/>
<dbReference type="eggNOG" id="KOG0829">
    <property type="taxonomic scope" value="Eukaryota"/>
</dbReference>
<dbReference type="HOGENOM" id="CLU_080773_0_1_1"/>
<dbReference type="InParanoid" id="G1TTY7"/>
<dbReference type="TreeFam" id="TF300086"/>
<dbReference type="Proteomes" id="UP000001811">
    <property type="component" value="Unplaced"/>
</dbReference>
<dbReference type="Bgee" id="ENSOCUG00000024833">
    <property type="expression patterns" value="Expressed in embryo and 17 other cell types or tissues"/>
</dbReference>
<dbReference type="GO" id="GO:0005737">
    <property type="term" value="C:cytoplasm"/>
    <property type="evidence" value="ECO:0007669"/>
    <property type="project" value="UniProtKB-SubCell"/>
</dbReference>
<dbReference type="GO" id="GO:1990904">
    <property type="term" value="C:ribonucleoprotein complex"/>
    <property type="evidence" value="ECO:0007669"/>
    <property type="project" value="UniProtKB-KW"/>
</dbReference>
<dbReference type="GO" id="GO:0005840">
    <property type="term" value="C:ribosome"/>
    <property type="evidence" value="ECO:0007669"/>
    <property type="project" value="UniProtKB-KW"/>
</dbReference>
<dbReference type="GO" id="GO:0003735">
    <property type="term" value="F:structural constituent of ribosome"/>
    <property type="evidence" value="ECO:0007669"/>
    <property type="project" value="InterPro"/>
</dbReference>
<dbReference type="GO" id="GO:0006412">
    <property type="term" value="P:translation"/>
    <property type="evidence" value="ECO:0007669"/>
    <property type="project" value="InterPro"/>
</dbReference>
<dbReference type="FunFam" id="3.10.20.10:FF:000001">
    <property type="entry name" value="60S ribosomal protein L18a"/>
    <property type="match status" value="1"/>
</dbReference>
<dbReference type="FunFam" id="3.10.20.10:FF:000002">
    <property type="entry name" value="60S ribosomal protein L18a"/>
    <property type="match status" value="1"/>
</dbReference>
<dbReference type="Gene3D" id="3.10.20.10">
    <property type="match status" value="2"/>
</dbReference>
<dbReference type="HAMAP" id="MF_00273">
    <property type="entry name" value="Ribosomal_eL20"/>
    <property type="match status" value="1"/>
</dbReference>
<dbReference type="InterPro" id="IPR028877">
    <property type="entry name" value="Ribosomal_eL20"/>
</dbReference>
<dbReference type="InterPro" id="IPR023573">
    <property type="entry name" value="Ribosomal_eL20_dom"/>
</dbReference>
<dbReference type="InterPro" id="IPR021138">
    <property type="entry name" value="Ribosomal_eL20_eukaryotes"/>
</dbReference>
<dbReference type="PANTHER" id="PTHR10052">
    <property type="entry name" value="60S RIBOSOMAL PROTEIN L18A"/>
    <property type="match status" value="1"/>
</dbReference>
<dbReference type="Pfam" id="PF01775">
    <property type="entry name" value="Ribosomal_L18A"/>
    <property type="match status" value="1"/>
</dbReference>
<dbReference type="PIRSF" id="PIRSF002190">
    <property type="entry name" value="Ribosomal_L18a"/>
    <property type="match status" value="1"/>
</dbReference>
<dbReference type="SUPFAM" id="SSF160374">
    <property type="entry name" value="RplX-like"/>
    <property type="match status" value="1"/>
</dbReference>
<evidence type="ECO:0000250" key="1">
    <source>
        <dbReference type="UniProtKB" id="P62717"/>
    </source>
</evidence>
<evidence type="ECO:0000250" key="2">
    <source>
        <dbReference type="UniProtKB" id="Q02543"/>
    </source>
</evidence>
<evidence type="ECO:0000269" key="3">
    <source>
    </source>
</evidence>
<evidence type="ECO:0000269" key="4">
    <source>
    </source>
</evidence>
<evidence type="ECO:0000269" key="5">
    <source>
    </source>
</evidence>
<evidence type="ECO:0000305" key="6"/>
<evidence type="ECO:0007744" key="7">
    <source>
        <dbReference type="PDB" id="6D90"/>
    </source>
</evidence>
<evidence type="ECO:0007744" key="8">
    <source>
        <dbReference type="PDB" id="7OYD"/>
    </source>
</evidence>
<evidence type="ECO:0007744" key="9">
    <source>
        <dbReference type="PDB" id="7ZJW"/>
    </source>
</evidence>
<evidence type="ECO:0007744" key="10">
    <source>
        <dbReference type="PDB" id="7ZJX"/>
    </source>
</evidence>
<comment type="function">
    <text evidence="2">Component of the large ribosomal subunit. The ribosome is a large ribonucleoprotein complex responsible for the synthesis of proteins in the cell.</text>
</comment>
<comment type="subunit">
    <text evidence="2 3 4 5">Component of the large ribosomal subunit (PubMed:29856316, PubMed:35709277, PubMed:36653451). Binds IPO9 with high affinity (By similarity).</text>
</comment>
<comment type="subcellular location">
    <subcellularLocation>
        <location evidence="3 4 5">Cytoplasm</location>
    </subcellularLocation>
</comment>
<comment type="similarity">
    <text evidence="6">Belongs to the eukaryotic ribosomal protein eL20 family.</text>
</comment>
<keyword id="KW-0002">3D-structure</keyword>
<keyword id="KW-0963">Cytoplasm</keyword>
<keyword id="KW-1017">Isopeptide bond</keyword>
<keyword id="KW-0597">Phosphoprotein</keyword>
<keyword id="KW-1185">Reference proteome</keyword>
<keyword id="KW-0687">Ribonucleoprotein</keyword>
<keyword id="KW-0689">Ribosomal protein</keyword>
<keyword id="KW-0832">Ubl conjugation</keyword>